<sequence>MIKVKIVRLNQKAILPVYATAHAAGMDVSACLDAPVTVPSSASALIPTGFAIELPEGYEAQLRPRSGLALRHCISLPNSPATIDADYRGEVGVILINHGREPFTVSHGDRIAQMVVAKVDHVVFEEVESLSETARGEGGFGHTGVQAKAECL</sequence>
<dbReference type="EC" id="3.6.1.23" evidence="1"/>
<dbReference type="EMBL" id="AF060080">
    <property type="protein sequence ID" value="AAC14879.1"/>
    <property type="molecule type" value="Genomic_DNA"/>
</dbReference>
<dbReference type="EMBL" id="AY005138">
    <property type="protein sequence ID" value="AAG12427.1"/>
    <property type="molecule type" value="Genomic_DNA"/>
</dbReference>
<dbReference type="EMBL" id="AE006470">
    <property type="protein sequence ID" value="AAM72646.1"/>
    <property type="molecule type" value="Genomic_DNA"/>
</dbReference>
<dbReference type="RefSeq" id="NP_662304.1">
    <property type="nucleotide sequence ID" value="NC_002932.3"/>
</dbReference>
<dbReference type="RefSeq" id="WP_010933085.1">
    <property type="nucleotide sequence ID" value="NC_002932.3"/>
</dbReference>
<dbReference type="SMR" id="O68992"/>
<dbReference type="STRING" id="194439.CT1418"/>
<dbReference type="EnsemblBacteria" id="AAM72646">
    <property type="protein sequence ID" value="AAM72646"/>
    <property type="gene ID" value="CT1418"/>
</dbReference>
<dbReference type="KEGG" id="cte:CT1418"/>
<dbReference type="PATRIC" id="fig|194439.7.peg.1286"/>
<dbReference type="eggNOG" id="COG0756">
    <property type="taxonomic scope" value="Bacteria"/>
</dbReference>
<dbReference type="HOGENOM" id="CLU_068508_1_2_10"/>
<dbReference type="OrthoDB" id="9809956at2"/>
<dbReference type="UniPathway" id="UPA00610">
    <property type="reaction ID" value="UER00666"/>
</dbReference>
<dbReference type="Proteomes" id="UP000001007">
    <property type="component" value="Chromosome"/>
</dbReference>
<dbReference type="GO" id="GO:0004170">
    <property type="term" value="F:dUTP diphosphatase activity"/>
    <property type="evidence" value="ECO:0007669"/>
    <property type="project" value="UniProtKB-UniRule"/>
</dbReference>
<dbReference type="GO" id="GO:0000287">
    <property type="term" value="F:magnesium ion binding"/>
    <property type="evidence" value="ECO:0007669"/>
    <property type="project" value="UniProtKB-UniRule"/>
</dbReference>
<dbReference type="GO" id="GO:0006226">
    <property type="term" value="P:dUMP biosynthetic process"/>
    <property type="evidence" value="ECO:0007669"/>
    <property type="project" value="UniProtKB-UniRule"/>
</dbReference>
<dbReference type="GO" id="GO:0046081">
    <property type="term" value="P:dUTP catabolic process"/>
    <property type="evidence" value="ECO:0007669"/>
    <property type="project" value="InterPro"/>
</dbReference>
<dbReference type="CDD" id="cd07557">
    <property type="entry name" value="trimeric_dUTPase"/>
    <property type="match status" value="1"/>
</dbReference>
<dbReference type="FunFam" id="2.70.40.10:FF:000002">
    <property type="entry name" value="dUTP diphosphatase"/>
    <property type="match status" value="1"/>
</dbReference>
<dbReference type="Gene3D" id="2.70.40.10">
    <property type="match status" value="1"/>
</dbReference>
<dbReference type="HAMAP" id="MF_00116">
    <property type="entry name" value="dUTPase_bact"/>
    <property type="match status" value="1"/>
</dbReference>
<dbReference type="InterPro" id="IPR008181">
    <property type="entry name" value="dUTPase"/>
</dbReference>
<dbReference type="InterPro" id="IPR029054">
    <property type="entry name" value="dUTPase-like"/>
</dbReference>
<dbReference type="InterPro" id="IPR036157">
    <property type="entry name" value="dUTPase-like_sf"/>
</dbReference>
<dbReference type="InterPro" id="IPR033704">
    <property type="entry name" value="dUTPase_trimeric"/>
</dbReference>
<dbReference type="NCBIfam" id="TIGR00576">
    <property type="entry name" value="dut"/>
    <property type="match status" value="1"/>
</dbReference>
<dbReference type="NCBIfam" id="NF001862">
    <property type="entry name" value="PRK00601.1"/>
    <property type="match status" value="1"/>
</dbReference>
<dbReference type="PANTHER" id="PTHR11241">
    <property type="entry name" value="DEOXYURIDINE 5'-TRIPHOSPHATE NUCLEOTIDOHYDROLASE"/>
    <property type="match status" value="1"/>
</dbReference>
<dbReference type="PANTHER" id="PTHR11241:SF0">
    <property type="entry name" value="DEOXYURIDINE 5'-TRIPHOSPHATE NUCLEOTIDOHYDROLASE"/>
    <property type="match status" value="1"/>
</dbReference>
<dbReference type="Pfam" id="PF00692">
    <property type="entry name" value="dUTPase"/>
    <property type="match status" value="1"/>
</dbReference>
<dbReference type="SUPFAM" id="SSF51283">
    <property type="entry name" value="dUTPase-like"/>
    <property type="match status" value="1"/>
</dbReference>
<feature type="chain" id="PRO_0000182848" description="Deoxyuridine 5'-triphosphate nucleotidohydrolase">
    <location>
        <begin position="1"/>
        <end position="152"/>
    </location>
</feature>
<feature type="binding site" evidence="1">
    <location>
        <begin position="65"/>
        <end position="67"/>
    </location>
    <ligand>
        <name>substrate</name>
    </ligand>
</feature>
<feature type="binding site" evidence="1">
    <location>
        <position position="78"/>
    </location>
    <ligand>
        <name>substrate</name>
    </ligand>
</feature>
<feature type="binding site" evidence="1">
    <location>
        <begin position="82"/>
        <end position="84"/>
    </location>
    <ligand>
        <name>substrate</name>
    </ligand>
</feature>
<feature type="sequence conflict" description="In Ref. 1; AAC14879." evidence="2" ref="1">
    <original>QL</original>
    <variation>HV</variation>
    <location>
        <begin position="61"/>
        <end position="62"/>
    </location>
</feature>
<accession>O68992</accession>
<accession>Q93ST9</accession>
<organism>
    <name type="scientific">Chlorobaculum tepidum (strain ATCC 49652 / DSM 12025 / NBRC 103806 / TLS)</name>
    <name type="common">Chlorobium tepidum</name>
    <dbReference type="NCBI Taxonomy" id="194439"/>
    <lineage>
        <taxon>Bacteria</taxon>
        <taxon>Pseudomonadati</taxon>
        <taxon>Chlorobiota</taxon>
        <taxon>Chlorobiia</taxon>
        <taxon>Chlorobiales</taxon>
        <taxon>Chlorobiaceae</taxon>
        <taxon>Chlorobaculum</taxon>
    </lineage>
</organism>
<reference key="1">
    <citation type="submission" date="1998-04" db="EMBL/GenBank/DDBJ databases">
        <authorList>
            <person name="Bryant D.A."/>
            <person name="Jakobs C."/>
            <person name="Stirewalt V.L."/>
        </authorList>
    </citation>
    <scope>NUCLEOTIDE SEQUENCE [GENOMIC DNA]</scope>
</reference>
<reference key="2">
    <citation type="journal article" date="2000" name="Science">
        <title>Molecular evidence for the early evolution of photosynthesis.</title>
        <authorList>
            <person name="Xiong J."/>
            <person name="Fischer W.M."/>
            <person name="Inoue K."/>
            <person name="Nakahara M."/>
            <person name="Bauer C.E."/>
        </authorList>
    </citation>
    <scope>NUCLEOTIDE SEQUENCE [GENOMIC DNA]</scope>
</reference>
<reference key="3">
    <citation type="journal article" date="2002" name="Proc. Natl. Acad. Sci. U.S.A.">
        <title>The complete genome sequence of Chlorobium tepidum TLS, a photosynthetic, anaerobic, green-sulfur bacterium.</title>
        <authorList>
            <person name="Eisen J.A."/>
            <person name="Nelson K.E."/>
            <person name="Paulsen I.T."/>
            <person name="Heidelberg J.F."/>
            <person name="Wu M."/>
            <person name="Dodson R.J."/>
            <person name="DeBoy R.T."/>
            <person name="Gwinn M.L."/>
            <person name="Nelson W.C."/>
            <person name="Haft D.H."/>
            <person name="Hickey E.K."/>
            <person name="Peterson J.D."/>
            <person name="Durkin A.S."/>
            <person name="Kolonay J.F."/>
            <person name="Yang F."/>
            <person name="Holt I.E."/>
            <person name="Umayam L.A."/>
            <person name="Mason T.M."/>
            <person name="Brenner M."/>
            <person name="Shea T.P."/>
            <person name="Parksey D.S."/>
            <person name="Nierman W.C."/>
            <person name="Feldblyum T.V."/>
            <person name="Hansen C.L."/>
            <person name="Craven M.B."/>
            <person name="Radune D."/>
            <person name="Vamathevan J.J."/>
            <person name="Khouri H.M."/>
            <person name="White O."/>
            <person name="Gruber T.M."/>
            <person name="Ketchum K.A."/>
            <person name="Venter J.C."/>
            <person name="Tettelin H."/>
            <person name="Bryant D.A."/>
            <person name="Fraser C.M."/>
        </authorList>
    </citation>
    <scope>NUCLEOTIDE SEQUENCE [LARGE SCALE GENOMIC DNA]</scope>
    <source>
        <strain>ATCC 49652 / DSM 12025 / NBRC 103806 / TLS</strain>
    </source>
</reference>
<proteinExistence type="inferred from homology"/>
<protein>
    <recommendedName>
        <fullName evidence="1">Deoxyuridine 5'-triphosphate nucleotidohydrolase</fullName>
        <shortName evidence="1">dUTPase</shortName>
        <ecNumber evidence="1">3.6.1.23</ecNumber>
    </recommendedName>
    <alternativeName>
        <fullName evidence="1">dUTP pyrophosphatase</fullName>
    </alternativeName>
</protein>
<gene>
    <name evidence="1" type="primary">dut</name>
    <name type="synonym">dutA</name>
    <name type="ordered locus">CT1418</name>
</gene>
<keyword id="KW-0378">Hydrolase</keyword>
<keyword id="KW-0460">Magnesium</keyword>
<keyword id="KW-0479">Metal-binding</keyword>
<keyword id="KW-0546">Nucleotide metabolism</keyword>
<keyword id="KW-1185">Reference proteome</keyword>
<comment type="function">
    <text evidence="1">This enzyme is involved in nucleotide metabolism: it produces dUMP, the immediate precursor of thymidine nucleotides and it decreases the intracellular concentration of dUTP so that uracil cannot be incorporated into DNA.</text>
</comment>
<comment type="catalytic activity">
    <reaction evidence="1">
        <text>dUTP + H2O = dUMP + diphosphate + H(+)</text>
        <dbReference type="Rhea" id="RHEA:10248"/>
        <dbReference type="ChEBI" id="CHEBI:15377"/>
        <dbReference type="ChEBI" id="CHEBI:15378"/>
        <dbReference type="ChEBI" id="CHEBI:33019"/>
        <dbReference type="ChEBI" id="CHEBI:61555"/>
        <dbReference type="ChEBI" id="CHEBI:246422"/>
        <dbReference type="EC" id="3.6.1.23"/>
    </reaction>
</comment>
<comment type="cofactor">
    <cofactor evidence="1">
        <name>Mg(2+)</name>
        <dbReference type="ChEBI" id="CHEBI:18420"/>
    </cofactor>
</comment>
<comment type="pathway">
    <text evidence="1">Pyrimidine metabolism; dUMP biosynthesis; dUMP from dCTP (dUTP route): step 2/2.</text>
</comment>
<comment type="similarity">
    <text evidence="1">Belongs to the dUTPase family.</text>
</comment>
<name>DUT_CHLTE</name>
<evidence type="ECO:0000255" key="1">
    <source>
        <dbReference type="HAMAP-Rule" id="MF_00116"/>
    </source>
</evidence>
<evidence type="ECO:0000305" key="2"/>